<feature type="signal peptide" evidence="2">
    <location>
        <begin position="1"/>
        <end position="19"/>
    </location>
</feature>
<feature type="chain" id="PRO_0000013084" description="Glutathione peroxidase 7">
    <location>
        <begin position="20"/>
        <end position="187"/>
    </location>
</feature>
<feature type="active site" evidence="1">
    <location>
        <position position="57"/>
    </location>
</feature>
<feature type="sequence conflict" description="In Ref. 7." evidence="4" ref="7">
    <original>GPH</original>
    <variation>HED</variation>
    <location>
        <begin position="75"/>
        <end position="77"/>
    </location>
</feature>
<feature type="helix" evidence="5">
    <location>
        <begin position="25"/>
        <end position="27"/>
    </location>
</feature>
<feature type="strand" evidence="5">
    <location>
        <begin position="29"/>
        <end position="32"/>
    </location>
</feature>
<feature type="strand" evidence="5">
    <location>
        <begin position="37"/>
        <end position="39"/>
    </location>
</feature>
<feature type="helix" evidence="5">
    <location>
        <begin position="40"/>
        <end position="43"/>
    </location>
</feature>
<feature type="strand" evidence="5">
    <location>
        <begin position="46"/>
        <end position="53"/>
    </location>
</feature>
<feature type="strand" evidence="5">
    <location>
        <begin position="55"/>
        <end position="57"/>
    </location>
</feature>
<feature type="helix" evidence="5">
    <location>
        <begin position="60"/>
        <end position="74"/>
    </location>
</feature>
<feature type="helix" evidence="5">
    <location>
        <begin position="75"/>
        <end position="77"/>
    </location>
</feature>
<feature type="strand" evidence="5">
    <location>
        <begin position="79"/>
        <end position="85"/>
    </location>
</feature>
<feature type="helix" evidence="5">
    <location>
        <begin position="97"/>
        <end position="108"/>
    </location>
</feature>
<feature type="helix" evidence="5">
    <location>
        <begin position="127"/>
        <end position="136"/>
    </location>
</feature>
<feature type="strand" evidence="5">
    <location>
        <begin position="146"/>
        <end position="149"/>
    </location>
</feature>
<feature type="strand" evidence="5">
    <location>
        <begin position="155"/>
        <end position="159"/>
    </location>
</feature>
<feature type="helix" evidence="5">
    <location>
        <begin position="165"/>
        <end position="173"/>
    </location>
</feature>
<proteinExistence type="evidence at protein level"/>
<organism>
    <name type="scientific">Homo sapiens</name>
    <name type="common">Human</name>
    <dbReference type="NCBI Taxonomy" id="9606"/>
    <lineage>
        <taxon>Eukaryota</taxon>
        <taxon>Metazoa</taxon>
        <taxon>Chordata</taxon>
        <taxon>Craniata</taxon>
        <taxon>Vertebrata</taxon>
        <taxon>Euteleostomi</taxon>
        <taxon>Mammalia</taxon>
        <taxon>Eutheria</taxon>
        <taxon>Euarchontoglires</taxon>
        <taxon>Primates</taxon>
        <taxon>Haplorrhini</taxon>
        <taxon>Catarrhini</taxon>
        <taxon>Hominidae</taxon>
        <taxon>Homo</taxon>
    </lineage>
</organism>
<accession>Q96SL4</accession>
<accession>O95337</accession>
<accession>Q5T501</accession>
<sequence>MVAATVAAAWLLLWAAACAQQEQDFYDFKAVNIRGKLVSLEKYRGSVSLVVNVASECGFTDQHYRALQQLQRDLGPHHFNVLAFPCNQFGQQEPDSNKEIESFARRTYSVSFPMFSKIAVTGTGAHPAFKYLAQTSGKEPTWNFWKYLVAPDGKVVGAWDPTVSVEEVRPQITALVRKLILLKREDL</sequence>
<reference key="1">
    <citation type="submission" date="2000-11" db="EMBL/GenBank/DDBJ databases">
        <title>Cloning and characterizing a novel human glutathione peroxidase-GPX6.</title>
        <authorList>
            <person name="Gu S."/>
            <person name="Lin S."/>
            <person name="Ying K."/>
            <person name="Xie Y."/>
            <person name="Mao Y."/>
        </authorList>
    </citation>
    <scope>NUCLEOTIDE SEQUENCE [MRNA]</scope>
    <source>
        <tissue>Fetal brain</tissue>
    </source>
</reference>
<reference key="2">
    <citation type="journal article" date="2003" name="Genome Res.">
        <title>The secreted protein discovery initiative (SPDI), a large-scale effort to identify novel human secreted and transmembrane proteins: a bioinformatics assessment.</title>
        <authorList>
            <person name="Clark H.F."/>
            <person name="Gurney A.L."/>
            <person name="Abaya E."/>
            <person name="Baker K."/>
            <person name="Baldwin D.T."/>
            <person name="Brush J."/>
            <person name="Chen J."/>
            <person name="Chow B."/>
            <person name="Chui C."/>
            <person name="Crowley C."/>
            <person name="Currell B."/>
            <person name="Deuel B."/>
            <person name="Dowd P."/>
            <person name="Eaton D."/>
            <person name="Foster J.S."/>
            <person name="Grimaldi C."/>
            <person name="Gu Q."/>
            <person name="Hass P.E."/>
            <person name="Heldens S."/>
            <person name="Huang A."/>
            <person name="Kim H.S."/>
            <person name="Klimowski L."/>
            <person name="Jin Y."/>
            <person name="Johnson S."/>
            <person name="Lee J."/>
            <person name="Lewis L."/>
            <person name="Liao D."/>
            <person name="Mark M.R."/>
            <person name="Robbie E."/>
            <person name="Sanchez C."/>
            <person name="Schoenfeld J."/>
            <person name="Seshagiri S."/>
            <person name="Simmons L."/>
            <person name="Singh J."/>
            <person name="Smith V."/>
            <person name="Stinson J."/>
            <person name="Vagts A."/>
            <person name="Vandlen R.L."/>
            <person name="Watanabe C."/>
            <person name="Wieand D."/>
            <person name="Woods K."/>
            <person name="Xie M.-H."/>
            <person name="Yansura D.G."/>
            <person name="Yi S."/>
            <person name="Yu G."/>
            <person name="Yuan J."/>
            <person name="Zhang M."/>
            <person name="Zhang Z."/>
            <person name="Goddard A.D."/>
            <person name="Wood W.I."/>
            <person name="Godowski P.J."/>
            <person name="Gray A.M."/>
        </authorList>
    </citation>
    <scope>NUCLEOTIDE SEQUENCE [LARGE SCALE MRNA]</scope>
</reference>
<reference key="3">
    <citation type="journal article" date="2004" name="Nat. Genet.">
        <title>Complete sequencing and characterization of 21,243 full-length human cDNAs.</title>
        <authorList>
            <person name="Ota T."/>
            <person name="Suzuki Y."/>
            <person name="Nishikawa T."/>
            <person name="Otsuki T."/>
            <person name="Sugiyama T."/>
            <person name="Irie R."/>
            <person name="Wakamatsu A."/>
            <person name="Hayashi K."/>
            <person name="Sato H."/>
            <person name="Nagai K."/>
            <person name="Kimura K."/>
            <person name="Makita H."/>
            <person name="Sekine M."/>
            <person name="Obayashi M."/>
            <person name="Nishi T."/>
            <person name="Shibahara T."/>
            <person name="Tanaka T."/>
            <person name="Ishii S."/>
            <person name="Yamamoto J."/>
            <person name="Saito K."/>
            <person name="Kawai Y."/>
            <person name="Isono Y."/>
            <person name="Nakamura Y."/>
            <person name="Nagahari K."/>
            <person name="Murakami K."/>
            <person name="Yasuda T."/>
            <person name="Iwayanagi T."/>
            <person name="Wagatsuma M."/>
            <person name="Shiratori A."/>
            <person name="Sudo H."/>
            <person name="Hosoiri T."/>
            <person name="Kaku Y."/>
            <person name="Kodaira H."/>
            <person name="Kondo H."/>
            <person name="Sugawara M."/>
            <person name="Takahashi M."/>
            <person name="Kanda K."/>
            <person name="Yokoi T."/>
            <person name="Furuya T."/>
            <person name="Kikkawa E."/>
            <person name="Omura Y."/>
            <person name="Abe K."/>
            <person name="Kamihara K."/>
            <person name="Katsuta N."/>
            <person name="Sato K."/>
            <person name="Tanikawa M."/>
            <person name="Yamazaki M."/>
            <person name="Ninomiya K."/>
            <person name="Ishibashi T."/>
            <person name="Yamashita H."/>
            <person name="Murakawa K."/>
            <person name="Fujimori K."/>
            <person name="Tanai H."/>
            <person name="Kimata M."/>
            <person name="Watanabe M."/>
            <person name="Hiraoka S."/>
            <person name="Chiba Y."/>
            <person name="Ishida S."/>
            <person name="Ono Y."/>
            <person name="Takiguchi S."/>
            <person name="Watanabe S."/>
            <person name="Yosida M."/>
            <person name="Hotuta T."/>
            <person name="Kusano J."/>
            <person name="Kanehori K."/>
            <person name="Takahashi-Fujii A."/>
            <person name="Hara H."/>
            <person name="Tanase T.-O."/>
            <person name="Nomura Y."/>
            <person name="Togiya S."/>
            <person name="Komai F."/>
            <person name="Hara R."/>
            <person name="Takeuchi K."/>
            <person name="Arita M."/>
            <person name="Imose N."/>
            <person name="Musashino K."/>
            <person name="Yuuki H."/>
            <person name="Oshima A."/>
            <person name="Sasaki N."/>
            <person name="Aotsuka S."/>
            <person name="Yoshikawa Y."/>
            <person name="Matsunawa H."/>
            <person name="Ichihara T."/>
            <person name="Shiohata N."/>
            <person name="Sano S."/>
            <person name="Moriya S."/>
            <person name="Momiyama H."/>
            <person name="Satoh N."/>
            <person name="Takami S."/>
            <person name="Terashima Y."/>
            <person name="Suzuki O."/>
            <person name="Nakagawa S."/>
            <person name="Senoh A."/>
            <person name="Mizoguchi H."/>
            <person name="Goto Y."/>
            <person name="Shimizu F."/>
            <person name="Wakebe H."/>
            <person name="Hishigaki H."/>
            <person name="Watanabe T."/>
            <person name="Sugiyama A."/>
            <person name="Takemoto M."/>
            <person name="Kawakami B."/>
            <person name="Yamazaki M."/>
            <person name="Watanabe K."/>
            <person name="Kumagai A."/>
            <person name="Itakura S."/>
            <person name="Fukuzumi Y."/>
            <person name="Fujimori Y."/>
            <person name="Komiyama M."/>
            <person name="Tashiro H."/>
            <person name="Tanigami A."/>
            <person name="Fujiwara T."/>
            <person name="Ono T."/>
            <person name="Yamada K."/>
            <person name="Fujii Y."/>
            <person name="Ozaki K."/>
            <person name="Hirao M."/>
            <person name="Ohmori Y."/>
            <person name="Kawabata A."/>
            <person name="Hikiji T."/>
            <person name="Kobatake N."/>
            <person name="Inagaki H."/>
            <person name="Ikema Y."/>
            <person name="Okamoto S."/>
            <person name="Okitani R."/>
            <person name="Kawakami T."/>
            <person name="Noguchi S."/>
            <person name="Itoh T."/>
            <person name="Shigeta K."/>
            <person name="Senba T."/>
            <person name="Matsumura K."/>
            <person name="Nakajima Y."/>
            <person name="Mizuno T."/>
            <person name="Morinaga M."/>
            <person name="Sasaki M."/>
            <person name="Togashi T."/>
            <person name="Oyama M."/>
            <person name="Hata H."/>
            <person name="Watanabe M."/>
            <person name="Komatsu T."/>
            <person name="Mizushima-Sugano J."/>
            <person name="Satoh T."/>
            <person name="Shirai Y."/>
            <person name="Takahashi Y."/>
            <person name="Nakagawa K."/>
            <person name="Okumura K."/>
            <person name="Nagase T."/>
            <person name="Nomura N."/>
            <person name="Kikuchi H."/>
            <person name="Masuho Y."/>
            <person name="Yamashita R."/>
            <person name="Nakai K."/>
            <person name="Yada T."/>
            <person name="Nakamura Y."/>
            <person name="Ohara O."/>
            <person name="Isogai T."/>
            <person name="Sugano S."/>
        </authorList>
    </citation>
    <scope>NUCLEOTIDE SEQUENCE [LARGE SCALE MRNA]</scope>
</reference>
<reference key="4">
    <citation type="submission" date="2005-06" db="EMBL/GenBank/DDBJ databases">
        <authorList>
            <consortium name="NIEHS SNPs program"/>
        </authorList>
    </citation>
    <scope>NUCLEOTIDE SEQUENCE [GENOMIC DNA]</scope>
</reference>
<reference key="5">
    <citation type="journal article" date="2006" name="Nature">
        <title>The DNA sequence and biological annotation of human chromosome 1.</title>
        <authorList>
            <person name="Gregory S.G."/>
            <person name="Barlow K.F."/>
            <person name="McLay K.E."/>
            <person name="Kaul R."/>
            <person name="Swarbreck D."/>
            <person name="Dunham A."/>
            <person name="Scott C.E."/>
            <person name="Howe K.L."/>
            <person name="Woodfine K."/>
            <person name="Spencer C.C.A."/>
            <person name="Jones M.C."/>
            <person name="Gillson C."/>
            <person name="Searle S."/>
            <person name="Zhou Y."/>
            <person name="Kokocinski F."/>
            <person name="McDonald L."/>
            <person name="Evans R."/>
            <person name="Phillips K."/>
            <person name="Atkinson A."/>
            <person name="Cooper R."/>
            <person name="Jones C."/>
            <person name="Hall R.E."/>
            <person name="Andrews T.D."/>
            <person name="Lloyd C."/>
            <person name="Ainscough R."/>
            <person name="Almeida J.P."/>
            <person name="Ambrose K.D."/>
            <person name="Anderson F."/>
            <person name="Andrew R.W."/>
            <person name="Ashwell R.I.S."/>
            <person name="Aubin K."/>
            <person name="Babbage A.K."/>
            <person name="Bagguley C.L."/>
            <person name="Bailey J."/>
            <person name="Beasley H."/>
            <person name="Bethel G."/>
            <person name="Bird C.P."/>
            <person name="Bray-Allen S."/>
            <person name="Brown J.Y."/>
            <person name="Brown A.J."/>
            <person name="Buckley D."/>
            <person name="Burton J."/>
            <person name="Bye J."/>
            <person name="Carder C."/>
            <person name="Chapman J.C."/>
            <person name="Clark S.Y."/>
            <person name="Clarke G."/>
            <person name="Clee C."/>
            <person name="Cobley V."/>
            <person name="Collier R.E."/>
            <person name="Corby N."/>
            <person name="Coville G.J."/>
            <person name="Davies J."/>
            <person name="Deadman R."/>
            <person name="Dunn M."/>
            <person name="Earthrowl M."/>
            <person name="Ellington A.G."/>
            <person name="Errington H."/>
            <person name="Frankish A."/>
            <person name="Frankland J."/>
            <person name="French L."/>
            <person name="Garner P."/>
            <person name="Garnett J."/>
            <person name="Gay L."/>
            <person name="Ghori M.R.J."/>
            <person name="Gibson R."/>
            <person name="Gilby L.M."/>
            <person name="Gillett W."/>
            <person name="Glithero R.J."/>
            <person name="Grafham D.V."/>
            <person name="Griffiths C."/>
            <person name="Griffiths-Jones S."/>
            <person name="Grocock R."/>
            <person name="Hammond S."/>
            <person name="Harrison E.S.I."/>
            <person name="Hart E."/>
            <person name="Haugen E."/>
            <person name="Heath P.D."/>
            <person name="Holmes S."/>
            <person name="Holt K."/>
            <person name="Howden P.J."/>
            <person name="Hunt A.R."/>
            <person name="Hunt S.E."/>
            <person name="Hunter G."/>
            <person name="Isherwood J."/>
            <person name="James R."/>
            <person name="Johnson C."/>
            <person name="Johnson D."/>
            <person name="Joy A."/>
            <person name="Kay M."/>
            <person name="Kershaw J.K."/>
            <person name="Kibukawa M."/>
            <person name="Kimberley A.M."/>
            <person name="King A."/>
            <person name="Knights A.J."/>
            <person name="Lad H."/>
            <person name="Laird G."/>
            <person name="Lawlor S."/>
            <person name="Leongamornlert D.A."/>
            <person name="Lloyd D.M."/>
            <person name="Loveland J."/>
            <person name="Lovell J."/>
            <person name="Lush M.J."/>
            <person name="Lyne R."/>
            <person name="Martin S."/>
            <person name="Mashreghi-Mohammadi M."/>
            <person name="Matthews L."/>
            <person name="Matthews N.S.W."/>
            <person name="McLaren S."/>
            <person name="Milne S."/>
            <person name="Mistry S."/>
            <person name="Moore M.J.F."/>
            <person name="Nickerson T."/>
            <person name="O'Dell C.N."/>
            <person name="Oliver K."/>
            <person name="Palmeiri A."/>
            <person name="Palmer S.A."/>
            <person name="Parker A."/>
            <person name="Patel D."/>
            <person name="Pearce A.V."/>
            <person name="Peck A.I."/>
            <person name="Pelan S."/>
            <person name="Phelps K."/>
            <person name="Phillimore B.J."/>
            <person name="Plumb R."/>
            <person name="Rajan J."/>
            <person name="Raymond C."/>
            <person name="Rouse G."/>
            <person name="Saenphimmachak C."/>
            <person name="Sehra H.K."/>
            <person name="Sheridan E."/>
            <person name="Shownkeen R."/>
            <person name="Sims S."/>
            <person name="Skuce C.D."/>
            <person name="Smith M."/>
            <person name="Steward C."/>
            <person name="Subramanian S."/>
            <person name="Sycamore N."/>
            <person name="Tracey A."/>
            <person name="Tromans A."/>
            <person name="Van Helmond Z."/>
            <person name="Wall M."/>
            <person name="Wallis J.M."/>
            <person name="White S."/>
            <person name="Whitehead S.L."/>
            <person name="Wilkinson J.E."/>
            <person name="Willey D.L."/>
            <person name="Williams H."/>
            <person name="Wilming L."/>
            <person name="Wray P.W."/>
            <person name="Wu Z."/>
            <person name="Coulson A."/>
            <person name="Vaudin M."/>
            <person name="Sulston J.E."/>
            <person name="Durbin R.M."/>
            <person name="Hubbard T."/>
            <person name="Wooster R."/>
            <person name="Dunham I."/>
            <person name="Carter N.P."/>
            <person name="McVean G."/>
            <person name="Ross M.T."/>
            <person name="Harrow J."/>
            <person name="Olson M.V."/>
            <person name="Beck S."/>
            <person name="Rogers J."/>
            <person name="Bentley D.R."/>
        </authorList>
    </citation>
    <scope>NUCLEOTIDE SEQUENCE [LARGE SCALE GENOMIC DNA]</scope>
</reference>
<reference key="6">
    <citation type="journal article" date="2004" name="Genome Res.">
        <title>The status, quality, and expansion of the NIH full-length cDNA project: the Mammalian Gene Collection (MGC).</title>
        <authorList>
            <consortium name="The MGC Project Team"/>
        </authorList>
    </citation>
    <scope>NUCLEOTIDE SEQUENCE [LARGE SCALE MRNA]</scope>
    <source>
        <tissue>Blood</tissue>
    </source>
</reference>
<reference key="7">
    <citation type="submission" date="1998-08" db="EMBL/GenBank/DDBJ databases">
        <title>Full-insert sequence of mapped XREF EST.</title>
        <authorList>
            <person name="Barrow I.K.-P."/>
            <person name="Boguski M.S."/>
            <person name="Touchman J.W."/>
            <person name="Spencer F."/>
        </authorList>
    </citation>
    <scope>NUCLEOTIDE SEQUENCE [LARGE SCALE MRNA] OF 75-187</scope>
</reference>
<reference key="8">
    <citation type="journal article" date="2012" name="Gut">
        <title>Glutathione peroxidase 7 protects against oxidative DNA damage in oesophageal cells.</title>
        <authorList>
            <person name="Peng D."/>
            <person name="Belkhiri A."/>
            <person name="Hu T."/>
            <person name="Chaturvedi R."/>
            <person name="Asim M."/>
            <person name="Wilson K.T."/>
            <person name="Zaika A."/>
            <person name="El-Rifai W."/>
        </authorList>
    </citation>
    <scope>FUNCTION</scope>
    <scope>TISSUE SPECIFICITY</scope>
    <scope>INVOLVEMENT IN BE</scope>
</reference>
<reference key="9">
    <citation type="submission" date="2007-03" db="PDB data bank">
        <title>Crystal structure of human glutathione peroxidase 7.</title>
        <authorList>
            <consortium name="Structural genomics consortium (SGC)"/>
        </authorList>
    </citation>
    <scope>X-RAY CRYSTALLOGRAPHY (2.0 ANGSTROMS) OF 20-177</scope>
</reference>
<name>GPX7_HUMAN</name>
<dbReference type="EC" id="1.11.1.9"/>
<dbReference type="EMBL" id="AF320068">
    <property type="protein sequence ID" value="AAN76501.1"/>
    <property type="molecule type" value="mRNA"/>
</dbReference>
<dbReference type="EMBL" id="AY358402">
    <property type="protein sequence ID" value="AAQ88768.1"/>
    <property type="molecule type" value="mRNA"/>
</dbReference>
<dbReference type="EMBL" id="AK027683">
    <property type="protein sequence ID" value="BAB55294.1"/>
    <property type="molecule type" value="mRNA"/>
</dbReference>
<dbReference type="EMBL" id="DQ096732">
    <property type="protein sequence ID" value="AAY88741.1"/>
    <property type="molecule type" value="Genomic_DNA"/>
</dbReference>
<dbReference type="EMBL" id="AL356976">
    <property type="status" value="NOT_ANNOTATED_CDS"/>
    <property type="molecule type" value="Genomic_DNA"/>
</dbReference>
<dbReference type="EMBL" id="BC032788">
    <property type="protein sequence ID" value="AAH32788.1"/>
    <property type="molecule type" value="mRNA"/>
</dbReference>
<dbReference type="EMBL" id="AF091092">
    <property type="protein sequence ID" value="AAC72961.1"/>
    <property type="status" value="ALT_SEQ"/>
    <property type="molecule type" value="mRNA"/>
</dbReference>
<dbReference type="CCDS" id="CCDS569.1"/>
<dbReference type="RefSeq" id="NP_056511.2">
    <property type="nucleotide sequence ID" value="NM_015696.4"/>
</dbReference>
<dbReference type="PDB" id="2P31">
    <property type="method" value="X-ray"/>
    <property type="resolution" value="2.00 A"/>
    <property type="chains" value="A/B=20-177"/>
</dbReference>
<dbReference type="PDBsum" id="2P31"/>
<dbReference type="SMR" id="Q96SL4"/>
<dbReference type="BioGRID" id="109139">
    <property type="interactions" value="69"/>
</dbReference>
<dbReference type="FunCoup" id="Q96SL4">
    <property type="interactions" value="216"/>
</dbReference>
<dbReference type="IntAct" id="Q96SL4">
    <property type="interactions" value="56"/>
</dbReference>
<dbReference type="STRING" id="9606.ENSP00000354677"/>
<dbReference type="DrugBank" id="DB09096">
    <property type="generic name" value="Benzoyl peroxide"/>
</dbReference>
<dbReference type="DrugBank" id="DB00143">
    <property type="generic name" value="Glutathione"/>
</dbReference>
<dbReference type="DrugBank" id="DB03310">
    <property type="generic name" value="Glutathione disulfide"/>
</dbReference>
<dbReference type="PeroxiBase" id="3606">
    <property type="entry name" value="HsGPx07"/>
</dbReference>
<dbReference type="GlyGen" id="Q96SL4">
    <property type="glycosylation" value="1 site, 1 O-linked glycan (1 site)"/>
</dbReference>
<dbReference type="iPTMnet" id="Q96SL4"/>
<dbReference type="PhosphoSitePlus" id="Q96SL4"/>
<dbReference type="BioMuta" id="GPX7"/>
<dbReference type="DMDM" id="33516901"/>
<dbReference type="jPOST" id="Q96SL4"/>
<dbReference type="MassIVE" id="Q96SL4"/>
<dbReference type="PaxDb" id="9606-ENSP00000354677"/>
<dbReference type="PeptideAtlas" id="Q96SL4"/>
<dbReference type="ProteomicsDB" id="78126"/>
<dbReference type="Pumba" id="Q96SL4"/>
<dbReference type="Antibodypedia" id="19147">
    <property type="antibodies" value="224 antibodies from 35 providers"/>
</dbReference>
<dbReference type="DNASU" id="2882"/>
<dbReference type="Ensembl" id="ENST00000361314.5">
    <property type="protein sequence ID" value="ENSP00000354677.4"/>
    <property type="gene ID" value="ENSG00000116157.6"/>
</dbReference>
<dbReference type="GeneID" id="2882"/>
<dbReference type="KEGG" id="hsa:2882"/>
<dbReference type="MANE-Select" id="ENST00000361314.5">
    <property type="protein sequence ID" value="ENSP00000354677.4"/>
    <property type="RefSeq nucleotide sequence ID" value="NM_015696.5"/>
    <property type="RefSeq protein sequence ID" value="NP_056511.2"/>
</dbReference>
<dbReference type="UCSC" id="uc001cue.4">
    <property type="organism name" value="human"/>
</dbReference>
<dbReference type="AGR" id="HGNC:4559"/>
<dbReference type="CTD" id="2882"/>
<dbReference type="DisGeNET" id="2882"/>
<dbReference type="GeneCards" id="GPX7"/>
<dbReference type="HGNC" id="HGNC:4559">
    <property type="gene designation" value="GPX7"/>
</dbReference>
<dbReference type="HPA" id="ENSG00000116157">
    <property type="expression patterns" value="Low tissue specificity"/>
</dbReference>
<dbReference type="MIM" id="614266">
    <property type="type" value="phenotype"/>
</dbReference>
<dbReference type="MIM" id="615784">
    <property type="type" value="gene"/>
</dbReference>
<dbReference type="neXtProt" id="NX_Q96SL4"/>
<dbReference type="OpenTargets" id="ENSG00000116157"/>
<dbReference type="PharmGKB" id="PA28955"/>
<dbReference type="VEuPathDB" id="HostDB:ENSG00000116157"/>
<dbReference type="eggNOG" id="KOG1651">
    <property type="taxonomic scope" value="Eukaryota"/>
</dbReference>
<dbReference type="GeneTree" id="ENSGT00940000159127"/>
<dbReference type="HOGENOM" id="CLU_029507_0_1_1"/>
<dbReference type="InParanoid" id="Q96SL4"/>
<dbReference type="OMA" id="QCGLTKQ"/>
<dbReference type="OrthoDB" id="446890at2759"/>
<dbReference type="PAN-GO" id="Q96SL4">
    <property type="GO annotations" value="1 GO annotation based on evolutionary models"/>
</dbReference>
<dbReference type="PhylomeDB" id="Q96SL4"/>
<dbReference type="TreeFam" id="TF331942"/>
<dbReference type="BRENDA" id="1.11.1.9">
    <property type="organism ID" value="2681"/>
</dbReference>
<dbReference type="PathwayCommons" id="Q96SL4"/>
<dbReference type="Reactome" id="R-HSA-3299685">
    <property type="pathway name" value="Detoxification of Reactive Oxygen Species"/>
</dbReference>
<dbReference type="SignaLink" id="Q96SL4"/>
<dbReference type="BioGRID-ORCS" id="2882">
    <property type="hits" value="8 hits in 1144 CRISPR screens"/>
</dbReference>
<dbReference type="ChiTaRS" id="GPX7">
    <property type="organism name" value="human"/>
</dbReference>
<dbReference type="EvolutionaryTrace" id="Q96SL4"/>
<dbReference type="GeneWiki" id="GPX7"/>
<dbReference type="GenomeRNAi" id="2882"/>
<dbReference type="Pharos" id="Q96SL4">
    <property type="development level" value="Tbio"/>
</dbReference>
<dbReference type="PRO" id="PR:Q96SL4"/>
<dbReference type="Proteomes" id="UP000005640">
    <property type="component" value="Chromosome 1"/>
</dbReference>
<dbReference type="RNAct" id="Q96SL4">
    <property type="molecule type" value="protein"/>
</dbReference>
<dbReference type="Bgee" id="ENSG00000116157">
    <property type="expression patterns" value="Expressed in adrenal tissue and 125 other cell types or tissues"/>
</dbReference>
<dbReference type="GO" id="GO:0005783">
    <property type="term" value="C:endoplasmic reticulum"/>
    <property type="evidence" value="ECO:0000314"/>
    <property type="project" value="UniProtKB"/>
</dbReference>
<dbReference type="GO" id="GO:0005788">
    <property type="term" value="C:endoplasmic reticulum lumen"/>
    <property type="evidence" value="ECO:0000304"/>
    <property type="project" value="Reactome"/>
</dbReference>
<dbReference type="GO" id="GO:0005576">
    <property type="term" value="C:extracellular region"/>
    <property type="evidence" value="ECO:0007669"/>
    <property type="project" value="UniProtKB-SubCell"/>
</dbReference>
<dbReference type="GO" id="GO:0004096">
    <property type="term" value="F:catalase activity"/>
    <property type="evidence" value="ECO:0000314"/>
    <property type="project" value="CACAO"/>
</dbReference>
<dbReference type="GO" id="GO:0004602">
    <property type="term" value="F:glutathione peroxidase activity"/>
    <property type="evidence" value="ECO:0007669"/>
    <property type="project" value="UniProtKB-EC"/>
</dbReference>
<dbReference type="GO" id="GO:0004601">
    <property type="term" value="F:peroxidase activity"/>
    <property type="evidence" value="ECO:0000269"/>
    <property type="project" value="Reactome"/>
</dbReference>
<dbReference type="GO" id="GO:0034599">
    <property type="term" value="P:cellular response to oxidative stress"/>
    <property type="evidence" value="ECO:0000304"/>
    <property type="project" value="Reactome"/>
</dbReference>
<dbReference type="CDD" id="cd00340">
    <property type="entry name" value="GSH_Peroxidase"/>
    <property type="match status" value="1"/>
</dbReference>
<dbReference type="FunFam" id="3.40.30.10:FF:000049">
    <property type="entry name" value="Glutathione peroxidase"/>
    <property type="match status" value="1"/>
</dbReference>
<dbReference type="Gene3D" id="3.40.30.10">
    <property type="entry name" value="Glutaredoxin"/>
    <property type="match status" value="1"/>
</dbReference>
<dbReference type="InterPro" id="IPR013376">
    <property type="entry name" value="Glut_perox_Gpx7"/>
</dbReference>
<dbReference type="InterPro" id="IPR000889">
    <property type="entry name" value="Glutathione_peroxidase"/>
</dbReference>
<dbReference type="InterPro" id="IPR029759">
    <property type="entry name" value="GPX_AS"/>
</dbReference>
<dbReference type="InterPro" id="IPR029760">
    <property type="entry name" value="GPX_CS"/>
</dbReference>
<dbReference type="InterPro" id="IPR036249">
    <property type="entry name" value="Thioredoxin-like_sf"/>
</dbReference>
<dbReference type="NCBIfam" id="TIGR02540">
    <property type="entry name" value="gpx7"/>
    <property type="match status" value="1"/>
</dbReference>
<dbReference type="PANTHER" id="PTHR11592">
    <property type="entry name" value="GLUTATHIONE PEROXIDASE"/>
    <property type="match status" value="1"/>
</dbReference>
<dbReference type="PANTHER" id="PTHR11592:SF5">
    <property type="entry name" value="GLUTATHIONE PEROXIDASE 7"/>
    <property type="match status" value="1"/>
</dbReference>
<dbReference type="Pfam" id="PF00255">
    <property type="entry name" value="GSHPx"/>
    <property type="match status" value="1"/>
</dbReference>
<dbReference type="PIRSF" id="PIRSF000303">
    <property type="entry name" value="Glutathion_perox"/>
    <property type="match status" value="1"/>
</dbReference>
<dbReference type="PRINTS" id="PR01011">
    <property type="entry name" value="GLUTPROXDASE"/>
</dbReference>
<dbReference type="SUPFAM" id="SSF52833">
    <property type="entry name" value="Thioredoxin-like"/>
    <property type="match status" value="1"/>
</dbReference>
<dbReference type="PROSITE" id="PS00460">
    <property type="entry name" value="GLUTATHIONE_PEROXID_1"/>
    <property type="match status" value="1"/>
</dbReference>
<dbReference type="PROSITE" id="PS00763">
    <property type="entry name" value="GLUTATHIONE_PEROXID_2"/>
    <property type="match status" value="1"/>
</dbReference>
<dbReference type="PROSITE" id="PS51355">
    <property type="entry name" value="GLUTATHIONE_PEROXID_3"/>
    <property type="match status" value="1"/>
</dbReference>
<comment type="function">
    <text evidence="3">It protects esophageal epithelia from hydrogen peroxide-induced oxidative stress. It suppresses acidic bile acid-induced reactive oxygen species (ROS) and protects against oxidative DNA damage and double-strand breaks.</text>
</comment>
<comment type="catalytic activity">
    <reaction>
        <text>2 glutathione + H2O2 = glutathione disulfide + 2 H2O</text>
        <dbReference type="Rhea" id="RHEA:16833"/>
        <dbReference type="ChEBI" id="CHEBI:15377"/>
        <dbReference type="ChEBI" id="CHEBI:16240"/>
        <dbReference type="ChEBI" id="CHEBI:57925"/>
        <dbReference type="ChEBI" id="CHEBI:58297"/>
        <dbReference type="EC" id="1.11.1.9"/>
    </reaction>
</comment>
<comment type="interaction">
    <interactant intactId="EBI-749411">
        <id>Q96SL4</id>
    </interactant>
    <interactant intactId="EBI-12092171">
        <id>Q12797-6</id>
        <label>ASPH</label>
    </interactant>
    <organismsDiffer>false</organismsDiffer>
    <experiments>3</experiments>
</comment>
<comment type="interaction">
    <interactant intactId="EBI-749411">
        <id>Q96SL4</id>
    </interactant>
    <interactant intactId="EBI-739624">
        <id>Q8NHQ1</id>
        <label>CEP70</label>
    </interactant>
    <organismsDiffer>false</organismsDiffer>
    <experiments>3</experiments>
</comment>
<comment type="interaction">
    <interactant intactId="EBI-749411">
        <id>Q96SL4</id>
    </interactant>
    <interactant intactId="EBI-12012272">
        <id>Q9UBL6-2</id>
        <label>CPNE7</label>
    </interactant>
    <organismsDiffer>false</organismsDiffer>
    <experiments>5</experiments>
</comment>
<comment type="interaction">
    <interactant intactId="EBI-749411">
        <id>Q96SL4</id>
    </interactant>
    <interactant intactId="EBI-10976677">
        <id>G5E9A7</id>
        <label>DMWD</label>
    </interactant>
    <organismsDiffer>false</organismsDiffer>
    <experiments>3</experiments>
</comment>
<comment type="interaction">
    <interactant intactId="EBI-749411">
        <id>Q96SL4</id>
    </interactant>
    <interactant intactId="EBI-2515857">
        <id>O43681</id>
        <label>GET3</label>
    </interactant>
    <organismsDiffer>false</organismsDiffer>
    <experiments>6</experiments>
</comment>
<comment type="interaction">
    <interactant intactId="EBI-749411">
        <id>Q96SL4</id>
    </interactant>
    <interactant intactId="EBI-466029">
        <id>P42858</id>
        <label>HTT</label>
    </interactant>
    <organismsDiffer>false</organismsDiffer>
    <experiments>3</experiments>
</comment>
<comment type="interaction">
    <interactant intactId="EBI-749411">
        <id>Q96SL4</id>
    </interactant>
    <interactant intactId="EBI-749635">
        <id>P61601</id>
        <label>NCALD</label>
    </interactant>
    <organismsDiffer>false</organismsDiffer>
    <experiments>3</experiments>
</comment>
<comment type="interaction">
    <interactant intactId="EBI-749411">
        <id>Q96SL4</id>
    </interactant>
    <interactant intactId="EBI-741158">
        <id>Q96HA8</id>
        <label>NTAQ1</label>
    </interactant>
    <organismsDiffer>false</organismsDiffer>
    <experiments>3</experiments>
</comment>
<comment type="interaction">
    <interactant intactId="EBI-749411">
        <id>Q96SL4</id>
    </interactant>
    <interactant intactId="EBI-347996">
        <id>O43765</id>
        <label>SGTA</label>
    </interactant>
    <organismsDiffer>false</organismsDiffer>
    <experiments>7</experiments>
</comment>
<comment type="interaction">
    <interactant intactId="EBI-749411">
        <id>Q96SL4</id>
    </interactant>
    <interactant intactId="EBI-744081">
        <id>Q96EQ0</id>
        <label>SGTB</label>
    </interactant>
    <organismsDiffer>false</organismsDiffer>
    <experiments>5</experiments>
</comment>
<comment type="interaction">
    <interactant intactId="EBI-749411">
        <id>Q96SL4</id>
    </interactant>
    <interactant intactId="EBI-5235340">
        <id>Q7Z699</id>
        <label>SPRED1</label>
    </interactant>
    <organismsDiffer>false</organismsDiffer>
    <experiments>3</experiments>
</comment>
<comment type="interaction">
    <interactant intactId="EBI-749411">
        <id>Q96SL4</id>
    </interactant>
    <interactant intactId="EBI-745182">
        <id>Q9BQ70</id>
        <label>TCF25</label>
    </interactant>
    <organismsDiffer>false</organismsDiffer>
    <experiments>3</experiments>
</comment>
<comment type="interaction">
    <interactant intactId="EBI-749411">
        <id>Q96SL4</id>
    </interactant>
    <interactant intactId="EBI-947187">
        <id>Q9UHD9</id>
        <label>UBQLN2</label>
    </interactant>
    <organismsDiffer>false</organismsDiffer>
    <experiments>3</experiments>
</comment>
<comment type="subcellular location">
    <subcellularLocation>
        <location evidence="4">Secreted</location>
    </subcellularLocation>
</comment>
<comment type="tissue specificity">
    <text evidence="3">Expressed in esophageal epithelial cells; expression is up-regulated after exposure to acidic bile acids.</text>
</comment>
<comment type="disease" evidence="3">
    <disease id="DI-03276">
        <name>Barrett esophagus</name>
        <acronym>BE</acronym>
        <description>A condition characterized by a metaplastic change in which normal esophageal squamous epithelium is replaced by a columnar and intestinal-type epithelium. Patients with Barrett esophagus have an increased risk of esophageal adenocarcinoma. The main cause of Barrett esophagus is gastroesophageal reflux. The retrograde movement of acid and bile salts from the stomach into the esophagus causes prolonged injury to the esophageal epithelium and induces chronic esophagitis, which in turn is believed to trigger the pathologic changes.</description>
        <dbReference type="MIM" id="614266"/>
    </disease>
    <text>The disease is caused by variants affecting the gene represented in this entry. The pathologic mechanisms leading to Barrett esophagus involve GPX7 dysfunction that results in higher levels of hydrogen peroxide and ROS-induced oxidative stress and DNA damage in esophageal cells.</text>
</comment>
<comment type="similarity">
    <text evidence="4">Belongs to the glutathione peroxidase family.</text>
</comment>
<comment type="sequence caution" evidence="4">
    <conflict type="erroneous translation">
        <sequence resource="EMBL-CDS" id="AAC72961"/>
    </conflict>
    <text>Wrong choice of frame.</text>
</comment>
<evidence type="ECO:0000250" key="1"/>
<evidence type="ECO:0000255" key="2"/>
<evidence type="ECO:0000269" key="3">
    <source>
    </source>
</evidence>
<evidence type="ECO:0000305" key="4"/>
<evidence type="ECO:0007829" key="5">
    <source>
        <dbReference type="PDB" id="2P31"/>
    </source>
</evidence>
<protein>
    <recommendedName>
        <fullName>Glutathione peroxidase 7</fullName>
        <shortName>GPx-7</shortName>
        <shortName>GSHPx-7</shortName>
        <ecNumber>1.11.1.9</ecNumber>
    </recommendedName>
    <alternativeName>
        <fullName>CL683</fullName>
    </alternativeName>
</protein>
<keyword id="KW-0002">3D-structure</keyword>
<keyword id="KW-0560">Oxidoreductase</keyword>
<keyword id="KW-0575">Peroxidase</keyword>
<keyword id="KW-1267">Proteomics identification</keyword>
<keyword id="KW-1185">Reference proteome</keyword>
<keyword id="KW-0964">Secreted</keyword>
<keyword id="KW-0732">Signal</keyword>
<gene>
    <name type="primary">GPX7</name>
    <name type="synonym">GPX6</name>
    <name type="ORF">UNQ469/PRO828</name>
</gene>